<name>ATP62_CHLL3</name>
<accession>Q3B141</accession>
<reference key="1">
    <citation type="submission" date="2005-08" db="EMBL/GenBank/DDBJ databases">
        <title>Complete sequence of Pelodictyon luteolum DSM 273.</title>
        <authorList>
            <consortium name="US DOE Joint Genome Institute"/>
            <person name="Copeland A."/>
            <person name="Lucas S."/>
            <person name="Lapidus A."/>
            <person name="Barry K."/>
            <person name="Detter J.C."/>
            <person name="Glavina T."/>
            <person name="Hammon N."/>
            <person name="Israni S."/>
            <person name="Pitluck S."/>
            <person name="Bryant D."/>
            <person name="Schmutz J."/>
            <person name="Larimer F."/>
            <person name="Land M."/>
            <person name="Kyrpides N."/>
            <person name="Ivanova N."/>
            <person name="Richardson P."/>
        </authorList>
    </citation>
    <scope>NUCLEOTIDE SEQUENCE [LARGE SCALE GENOMIC DNA]</scope>
    <source>
        <strain>DSM 273 / BCRC 81028 / 2530</strain>
    </source>
</reference>
<keyword id="KW-0066">ATP synthesis</keyword>
<keyword id="KW-0997">Cell inner membrane</keyword>
<keyword id="KW-1003">Cell membrane</keyword>
<keyword id="KW-0138">CF(0)</keyword>
<keyword id="KW-0375">Hydrogen ion transport</keyword>
<keyword id="KW-0406">Ion transport</keyword>
<keyword id="KW-0472">Membrane</keyword>
<keyword id="KW-1185">Reference proteome</keyword>
<keyword id="KW-0732">Signal</keyword>
<keyword id="KW-0812">Transmembrane</keyword>
<keyword id="KW-1133">Transmembrane helix</keyword>
<keyword id="KW-0813">Transport</keyword>
<feature type="signal peptide" evidence="1">
    <location>
        <begin position="1"/>
        <end position="33"/>
    </location>
</feature>
<feature type="chain" id="PRO_5000100924" description="ATP synthase subunit a 2">
    <location>
        <begin position="34"/>
        <end position="341"/>
    </location>
</feature>
<feature type="transmembrane region" description="Helical" evidence="2">
    <location>
        <begin position="112"/>
        <end position="132"/>
    </location>
</feature>
<feature type="transmembrane region" description="Helical" evidence="2">
    <location>
        <begin position="173"/>
        <end position="193"/>
    </location>
</feature>
<feature type="transmembrane region" description="Helical" evidence="2">
    <location>
        <begin position="195"/>
        <end position="215"/>
    </location>
</feature>
<feature type="transmembrane region" description="Helical" evidence="2">
    <location>
        <begin position="242"/>
        <end position="262"/>
    </location>
</feature>
<feature type="transmembrane region" description="Helical" evidence="2">
    <location>
        <begin position="273"/>
        <end position="293"/>
    </location>
</feature>
<feature type="transmembrane region" description="Helical" evidence="2">
    <location>
        <begin position="307"/>
        <end position="327"/>
    </location>
</feature>
<organism>
    <name type="scientific">Chlorobium luteolum (strain DSM 273 / BCRC 81028 / 2530)</name>
    <name type="common">Pelodictyon luteolum</name>
    <dbReference type="NCBI Taxonomy" id="319225"/>
    <lineage>
        <taxon>Bacteria</taxon>
        <taxon>Pseudomonadati</taxon>
        <taxon>Chlorobiota</taxon>
        <taxon>Chlorobiia</taxon>
        <taxon>Chlorobiales</taxon>
        <taxon>Chlorobiaceae</taxon>
        <taxon>Chlorobium/Pelodictyon group</taxon>
        <taxon>Pelodictyon</taxon>
    </lineage>
</organism>
<dbReference type="EMBL" id="CP000096">
    <property type="protein sequence ID" value="ABB24940.1"/>
    <property type="molecule type" value="Genomic_DNA"/>
</dbReference>
<dbReference type="RefSeq" id="WP_011358810.1">
    <property type="nucleotide sequence ID" value="NC_007512.1"/>
</dbReference>
<dbReference type="SMR" id="Q3B141"/>
<dbReference type="STRING" id="319225.Plut_2098"/>
<dbReference type="KEGG" id="plt:Plut_2098"/>
<dbReference type="eggNOG" id="COG0356">
    <property type="taxonomic scope" value="Bacteria"/>
</dbReference>
<dbReference type="HOGENOM" id="CLU_041018_0_0_10"/>
<dbReference type="OrthoDB" id="9809130at2"/>
<dbReference type="Proteomes" id="UP000002709">
    <property type="component" value="Chromosome"/>
</dbReference>
<dbReference type="GO" id="GO:0005886">
    <property type="term" value="C:plasma membrane"/>
    <property type="evidence" value="ECO:0007669"/>
    <property type="project" value="UniProtKB-SubCell"/>
</dbReference>
<dbReference type="GO" id="GO:0045259">
    <property type="term" value="C:proton-transporting ATP synthase complex"/>
    <property type="evidence" value="ECO:0007669"/>
    <property type="project" value="UniProtKB-KW"/>
</dbReference>
<dbReference type="GO" id="GO:0046933">
    <property type="term" value="F:proton-transporting ATP synthase activity, rotational mechanism"/>
    <property type="evidence" value="ECO:0007669"/>
    <property type="project" value="UniProtKB-UniRule"/>
</dbReference>
<dbReference type="CDD" id="cd00310">
    <property type="entry name" value="ATP-synt_Fo_a_6"/>
    <property type="match status" value="1"/>
</dbReference>
<dbReference type="Gene3D" id="1.20.120.220">
    <property type="entry name" value="ATP synthase, F0 complex, subunit A"/>
    <property type="match status" value="1"/>
</dbReference>
<dbReference type="HAMAP" id="MF_01393">
    <property type="entry name" value="ATP_synth_a_bact"/>
    <property type="match status" value="1"/>
</dbReference>
<dbReference type="InterPro" id="IPR000568">
    <property type="entry name" value="ATP_synth_F0_asu"/>
</dbReference>
<dbReference type="InterPro" id="IPR023011">
    <property type="entry name" value="ATP_synth_F0_asu_AS"/>
</dbReference>
<dbReference type="InterPro" id="IPR045083">
    <property type="entry name" value="ATP_synth_F0_asu_bact/mt"/>
</dbReference>
<dbReference type="InterPro" id="IPR035908">
    <property type="entry name" value="F0_ATP_A_sf"/>
</dbReference>
<dbReference type="NCBIfam" id="TIGR01131">
    <property type="entry name" value="ATP_synt_6_or_A"/>
    <property type="match status" value="1"/>
</dbReference>
<dbReference type="NCBIfam" id="NF009953">
    <property type="entry name" value="PRK13419.1"/>
    <property type="match status" value="1"/>
</dbReference>
<dbReference type="PANTHER" id="PTHR11410">
    <property type="entry name" value="ATP SYNTHASE SUBUNIT A"/>
    <property type="match status" value="1"/>
</dbReference>
<dbReference type="PANTHER" id="PTHR11410:SF0">
    <property type="entry name" value="ATP SYNTHASE SUBUNIT A"/>
    <property type="match status" value="1"/>
</dbReference>
<dbReference type="Pfam" id="PF00119">
    <property type="entry name" value="ATP-synt_A"/>
    <property type="match status" value="1"/>
</dbReference>
<dbReference type="PRINTS" id="PR00123">
    <property type="entry name" value="ATPASEA"/>
</dbReference>
<dbReference type="SUPFAM" id="SSF81336">
    <property type="entry name" value="F1F0 ATP synthase subunit A"/>
    <property type="match status" value="1"/>
</dbReference>
<dbReference type="PROSITE" id="PS00449">
    <property type="entry name" value="ATPASE_A"/>
    <property type="match status" value="1"/>
</dbReference>
<comment type="function">
    <text evidence="2">Key component of the proton channel; it plays a direct role in the translocation of protons across the membrane.</text>
</comment>
<comment type="subunit">
    <text evidence="2">F-type ATPases have 2 components, CF(1) - the catalytic core - and CF(0) - the membrane proton channel. CF(1) has five subunits: alpha(3), beta(3), gamma(1), delta(1), epsilon(1). CF(0) has four main subunits: a, b, b' and c.</text>
</comment>
<comment type="subcellular location">
    <subcellularLocation>
        <location evidence="2">Cell inner membrane</location>
        <topology evidence="2">Multi-pass membrane protein</topology>
    </subcellularLocation>
</comment>
<comment type="similarity">
    <text evidence="2">Belongs to the ATPase A chain family.</text>
</comment>
<evidence type="ECO:0000255" key="1"/>
<evidence type="ECO:0000255" key="2">
    <source>
        <dbReference type="HAMAP-Rule" id="MF_01393"/>
    </source>
</evidence>
<sequence>MKRVKVIQIKGFFRVMALLAPLLLNAYLPVQASEEHAAPVAAVVAAHAEAAVDPALEPAHAEPAGHEDEKAGDVIMHHILNSHSFSFEPFGTIHLPTLPPVFGIDISITKHVVMLWIVSAILLVLFSFVGAAYRKITPKTAPSGVANTMEALVEFIRLDVAKSNIGHGYEAHLPYLLTVFMFILLCNILGLIPYGATATGNINVTLTLAVFTFFITQAASLKAHGLKGYLTHLTAGTHWSLWIIMIPIEVIGLFTKPFALTVRLFANMTAGHIVILSLIFISFILKSYVVAAAVSVPFSIFIYLLEIFVAFLQAFIFTMLSALFIGLATAHEGGEAEAAHH</sequence>
<gene>
    <name evidence="2" type="primary">atpB2</name>
    <name type="ordered locus">Plut_2098</name>
</gene>
<proteinExistence type="inferred from homology"/>
<protein>
    <recommendedName>
        <fullName evidence="2">ATP synthase subunit a 2</fullName>
    </recommendedName>
    <alternativeName>
        <fullName evidence="2">ATP synthase F0 sector subunit a 2</fullName>
    </alternativeName>
    <alternativeName>
        <fullName evidence="2">F-ATPase subunit 6 2</fullName>
    </alternativeName>
</protein>